<keyword id="KW-0106">Calcium</keyword>
<keyword id="KW-0903">Direct protein sequencing</keyword>
<keyword id="KW-1015">Disulfide bond</keyword>
<keyword id="KW-0378">Hydrolase</keyword>
<keyword id="KW-0442">Lipid degradation</keyword>
<keyword id="KW-0443">Lipid metabolism</keyword>
<keyword id="KW-0479">Metal-binding</keyword>
<keyword id="KW-0959">Myotoxin</keyword>
<keyword id="KW-0528">Neurotoxin</keyword>
<keyword id="KW-0638">Presynaptic neurotoxin</keyword>
<keyword id="KW-0964">Secreted</keyword>
<keyword id="KW-0732">Signal</keyword>
<keyword id="KW-0800">Toxin</keyword>
<accession>Q805A2</accession>
<accession>Q805A3</accession>
<sequence>MRTLWIMAVLLVGVEGNLLQFNKMIKIMTKKNGFPFYTSYGCYCGWGGRGKPKDATDRCCFVHDCCYEKLTDCSPKSDIYSYSWKTGVIICGEGTECEKQICECDRAAAVCFGQNLRTYKKKYMFYPDFLCTDPTEKC</sequence>
<feature type="signal peptide" evidence="5 6">
    <location>
        <begin position="1"/>
        <end position="16"/>
    </location>
</feature>
<feature type="chain" id="PRO_0000022954" description="Basic phospholipase A2 PLA-N">
    <location>
        <begin position="17"/>
        <end position="138"/>
    </location>
</feature>
<feature type="active site" evidence="2">
    <location>
        <position position="63"/>
    </location>
</feature>
<feature type="active site" evidence="2">
    <location>
        <position position="105"/>
    </location>
</feature>
<feature type="binding site" evidence="2">
    <location>
        <position position="43"/>
    </location>
    <ligand>
        <name>Ca(2+)</name>
        <dbReference type="ChEBI" id="CHEBI:29108"/>
    </ligand>
</feature>
<feature type="binding site" evidence="2">
    <location>
        <position position="45"/>
    </location>
    <ligand>
        <name>Ca(2+)</name>
        <dbReference type="ChEBI" id="CHEBI:29108"/>
    </ligand>
</feature>
<feature type="binding site" evidence="2">
    <location>
        <position position="47"/>
    </location>
    <ligand>
        <name>Ca(2+)</name>
        <dbReference type="ChEBI" id="CHEBI:29108"/>
    </ligand>
</feature>
<feature type="binding site" evidence="2">
    <location>
        <position position="64"/>
    </location>
    <ligand>
        <name>Ca(2+)</name>
        <dbReference type="ChEBI" id="CHEBI:29108"/>
    </ligand>
</feature>
<feature type="disulfide bond" evidence="2">
    <location>
        <begin position="42"/>
        <end position="131"/>
    </location>
</feature>
<feature type="disulfide bond" evidence="2">
    <location>
        <begin position="44"/>
        <end position="60"/>
    </location>
</feature>
<feature type="disulfide bond" evidence="2">
    <location>
        <begin position="59"/>
        <end position="111"/>
    </location>
</feature>
<feature type="disulfide bond" evidence="2">
    <location>
        <begin position="65"/>
        <end position="138"/>
    </location>
</feature>
<feature type="disulfide bond" evidence="2">
    <location>
        <begin position="66"/>
        <end position="104"/>
    </location>
</feature>
<feature type="disulfide bond" evidence="2">
    <location>
        <begin position="73"/>
        <end position="97"/>
    </location>
</feature>
<feature type="disulfide bond" evidence="2">
    <location>
        <begin position="91"/>
        <end position="102"/>
    </location>
</feature>
<feature type="sequence variant" description="In strain: Okinawa." evidence="5">
    <original>K</original>
    <variation>N</variation>
    <location>
        <position position="121"/>
    </location>
</feature>
<organism>
    <name type="scientific">Protobothrops flavoviridis</name>
    <name type="common">Habu</name>
    <name type="synonym">Trimeresurus flavoviridis</name>
    <dbReference type="NCBI Taxonomy" id="88087"/>
    <lineage>
        <taxon>Eukaryota</taxon>
        <taxon>Metazoa</taxon>
        <taxon>Chordata</taxon>
        <taxon>Craniata</taxon>
        <taxon>Vertebrata</taxon>
        <taxon>Euteleostomi</taxon>
        <taxon>Lepidosauria</taxon>
        <taxon>Squamata</taxon>
        <taxon>Bifurcata</taxon>
        <taxon>Unidentata</taxon>
        <taxon>Episquamata</taxon>
        <taxon>Toxicofera</taxon>
        <taxon>Serpentes</taxon>
        <taxon>Colubroidea</taxon>
        <taxon>Viperidae</taxon>
        <taxon>Crotalinae</taxon>
        <taxon>Protobothrops</taxon>
    </lineage>
</organism>
<protein>
    <recommendedName>
        <fullName>Basic phospholipase A2 PLA-N</fullName>
        <shortName>svPLA2</shortName>
        <ecNumber>3.1.1.4</ecNumber>
    </recommendedName>
    <alternativeName>
        <fullName>Phosphatidylcholine 2-acylhydrolase</fullName>
    </alternativeName>
    <alternativeName>
        <fullName>Phospholipase A2 PLA-N(O)</fullName>
    </alternativeName>
</protein>
<name>PA2BN_PROFL</name>
<proteinExistence type="evidence at protein level"/>
<comment type="function">
    <text evidence="5">Snake venom phospholipase A2 (PLA2) that displays edema-inducing activities, as well as presynaptic neurotoxicity and myotoxicity. PLA2 catalyzes the calcium-dependent hydrolysis of the 2-acyl groups in 3-sn-phosphoglycerides.</text>
</comment>
<comment type="catalytic activity">
    <reaction evidence="3 4">
        <text>a 1,2-diacyl-sn-glycero-3-phosphocholine + H2O = a 1-acyl-sn-glycero-3-phosphocholine + a fatty acid + H(+)</text>
        <dbReference type="Rhea" id="RHEA:15801"/>
        <dbReference type="ChEBI" id="CHEBI:15377"/>
        <dbReference type="ChEBI" id="CHEBI:15378"/>
        <dbReference type="ChEBI" id="CHEBI:28868"/>
        <dbReference type="ChEBI" id="CHEBI:57643"/>
        <dbReference type="ChEBI" id="CHEBI:58168"/>
        <dbReference type="EC" id="3.1.1.4"/>
    </reaction>
</comment>
<comment type="cofactor">
    <cofactor evidence="1">
        <name>Ca(2+)</name>
        <dbReference type="ChEBI" id="CHEBI:29108"/>
    </cofactor>
    <text evidence="1">Binds 1 Ca(2+) ion.</text>
</comment>
<comment type="subcellular location">
    <subcellularLocation>
        <location evidence="1">Secreted</location>
    </subcellularLocation>
</comment>
<comment type="tissue specificity">
    <text>Expressed by the venom gland.</text>
</comment>
<comment type="mass spectrometry"/>
<comment type="toxic dose">
    <text evidence="5">LD(50) is 1.34 mg/kg by intravenous injection into mice (in Amami-Oshima and Tokunoshima strains).</text>
</comment>
<comment type="similarity">
    <text evidence="7">Belongs to the phospholipase A2 family. Group II subfamily. D49 sub-subfamily.</text>
</comment>
<reference key="1">
    <citation type="journal article" date="2003" name="J. Mol. Evol.">
        <title>Interisland mutation of a novel phospholipase A2 from Trimeresurus flavoviridis venom and evolution of Crotalinae group II phospholipases A2.</title>
        <authorList>
            <person name="Chijiwa T."/>
            <person name="Hamai S."/>
            <person name="Tsubouchi S."/>
            <person name="Ogawa T."/>
            <person name="Deshimaru M."/>
            <person name="Oda-Ueda N."/>
            <person name="Hattori S."/>
            <person name="Kihara H."/>
            <person name="Tsunasawa S."/>
            <person name="Ohno M."/>
        </authorList>
    </citation>
    <scope>NUCLEOTIDE SEQUENCE [MRNA]</scope>
    <scope>PROTEIN SEQUENCE OF 17-45</scope>
    <scope>FUNCTION</scope>
    <scope>TOXIC DOSE</scope>
    <scope>VARIANT ASN-121</scope>
    <source>
        <strain>Amami-Oshima</strain>
        <strain>Okinawa</strain>
        <strain>Tokunoshima</strain>
        <tissue>Venom</tissue>
        <tissue>Venom gland</tissue>
    </source>
</reference>
<reference key="2">
    <citation type="journal article" date="2004" name="Biochem. J.">
        <title>Molecular evolution and structure-function relationships of crotoxin-like and asparagine-6-containing phospholipases A2 in pit viper venoms.</title>
        <authorList>
            <person name="Chen Y.-H."/>
            <person name="Wang Y.-M."/>
            <person name="Hseu M.-J."/>
            <person name="Tsai I.-H."/>
        </authorList>
    </citation>
    <scope>PROTEIN SEQUENCE OF 17-39</scope>
    <scope>MASS SPECTROMETRY</scope>
    <source>
        <tissue>Venom</tissue>
    </source>
</reference>
<evidence type="ECO:0000250" key="1"/>
<evidence type="ECO:0000250" key="2">
    <source>
        <dbReference type="UniProtKB" id="O42187"/>
    </source>
</evidence>
<evidence type="ECO:0000255" key="3">
    <source>
        <dbReference type="PROSITE-ProRule" id="PRU10035"/>
    </source>
</evidence>
<evidence type="ECO:0000255" key="4">
    <source>
        <dbReference type="PROSITE-ProRule" id="PRU10036"/>
    </source>
</evidence>
<evidence type="ECO:0000269" key="5">
    <source>
    </source>
</evidence>
<evidence type="ECO:0000269" key="6">
    <source>
    </source>
</evidence>
<evidence type="ECO:0000305" key="7"/>
<dbReference type="EC" id="3.1.1.4"/>
<dbReference type="EMBL" id="AB102728">
    <property type="protein sequence ID" value="BAC56892.1"/>
    <property type="molecule type" value="mRNA"/>
</dbReference>
<dbReference type="EMBL" id="AB102728">
    <property type="protein sequence ID" value="BAC56893.1"/>
    <property type="molecule type" value="mRNA"/>
</dbReference>
<dbReference type="SMR" id="Q805A2"/>
<dbReference type="GO" id="GO:0005576">
    <property type="term" value="C:extracellular region"/>
    <property type="evidence" value="ECO:0007669"/>
    <property type="project" value="UniProtKB-SubCell"/>
</dbReference>
<dbReference type="GO" id="GO:0005509">
    <property type="term" value="F:calcium ion binding"/>
    <property type="evidence" value="ECO:0007669"/>
    <property type="project" value="InterPro"/>
</dbReference>
<dbReference type="GO" id="GO:0047498">
    <property type="term" value="F:calcium-dependent phospholipase A2 activity"/>
    <property type="evidence" value="ECO:0007669"/>
    <property type="project" value="TreeGrafter"/>
</dbReference>
<dbReference type="GO" id="GO:0005543">
    <property type="term" value="F:phospholipid binding"/>
    <property type="evidence" value="ECO:0007669"/>
    <property type="project" value="TreeGrafter"/>
</dbReference>
<dbReference type="GO" id="GO:0090729">
    <property type="term" value="F:toxin activity"/>
    <property type="evidence" value="ECO:0007669"/>
    <property type="project" value="UniProtKB-KW"/>
</dbReference>
<dbReference type="GO" id="GO:0050482">
    <property type="term" value="P:arachidonate secretion"/>
    <property type="evidence" value="ECO:0007669"/>
    <property type="project" value="InterPro"/>
</dbReference>
<dbReference type="GO" id="GO:0016042">
    <property type="term" value="P:lipid catabolic process"/>
    <property type="evidence" value="ECO:0007669"/>
    <property type="project" value="UniProtKB-KW"/>
</dbReference>
<dbReference type="GO" id="GO:0042130">
    <property type="term" value="P:negative regulation of T cell proliferation"/>
    <property type="evidence" value="ECO:0007669"/>
    <property type="project" value="TreeGrafter"/>
</dbReference>
<dbReference type="GO" id="GO:0006644">
    <property type="term" value="P:phospholipid metabolic process"/>
    <property type="evidence" value="ECO:0007669"/>
    <property type="project" value="InterPro"/>
</dbReference>
<dbReference type="CDD" id="cd00125">
    <property type="entry name" value="PLA2c"/>
    <property type="match status" value="1"/>
</dbReference>
<dbReference type="FunFam" id="1.20.90.10:FF:000001">
    <property type="entry name" value="Basic phospholipase A2 homolog"/>
    <property type="match status" value="1"/>
</dbReference>
<dbReference type="Gene3D" id="1.20.90.10">
    <property type="entry name" value="Phospholipase A2 domain"/>
    <property type="match status" value="1"/>
</dbReference>
<dbReference type="InterPro" id="IPR001211">
    <property type="entry name" value="PLipase_A2"/>
</dbReference>
<dbReference type="InterPro" id="IPR033112">
    <property type="entry name" value="PLipase_A2_Asp_AS"/>
</dbReference>
<dbReference type="InterPro" id="IPR016090">
    <property type="entry name" value="PLipase_A2_dom"/>
</dbReference>
<dbReference type="InterPro" id="IPR036444">
    <property type="entry name" value="PLipase_A2_dom_sf"/>
</dbReference>
<dbReference type="InterPro" id="IPR033113">
    <property type="entry name" value="PLipase_A2_His_AS"/>
</dbReference>
<dbReference type="PANTHER" id="PTHR11716">
    <property type="entry name" value="PHOSPHOLIPASE A2 FAMILY MEMBER"/>
    <property type="match status" value="1"/>
</dbReference>
<dbReference type="PANTHER" id="PTHR11716:SF9">
    <property type="entry name" value="PHOSPHOLIPASE A2, MEMBRANE ASSOCIATED"/>
    <property type="match status" value="1"/>
</dbReference>
<dbReference type="Pfam" id="PF00068">
    <property type="entry name" value="Phospholip_A2_1"/>
    <property type="match status" value="1"/>
</dbReference>
<dbReference type="PRINTS" id="PR00389">
    <property type="entry name" value="PHPHLIPASEA2"/>
</dbReference>
<dbReference type="SMART" id="SM00085">
    <property type="entry name" value="PA2c"/>
    <property type="match status" value="1"/>
</dbReference>
<dbReference type="SUPFAM" id="SSF48619">
    <property type="entry name" value="Phospholipase A2, PLA2"/>
    <property type="match status" value="1"/>
</dbReference>
<dbReference type="PROSITE" id="PS00119">
    <property type="entry name" value="PA2_ASP"/>
    <property type="match status" value="1"/>
</dbReference>
<dbReference type="PROSITE" id="PS00118">
    <property type="entry name" value="PA2_HIS"/>
    <property type="match status" value="1"/>
</dbReference>